<dbReference type="EC" id="2.1.1.192" evidence="1"/>
<dbReference type="EMBL" id="CP000478">
    <property type="protein sequence ID" value="ABK19723.1"/>
    <property type="molecule type" value="Genomic_DNA"/>
</dbReference>
<dbReference type="RefSeq" id="WP_011700836.1">
    <property type="nucleotide sequence ID" value="NC_008554.1"/>
</dbReference>
<dbReference type="SMR" id="A0LQM1"/>
<dbReference type="FunCoup" id="A0LQM1">
    <property type="interactions" value="540"/>
</dbReference>
<dbReference type="STRING" id="335543.Sfum_4057"/>
<dbReference type="KEGG" id="sfu:Sfum_4057"/>
<dbReference type="eggNOG" id="COG0820">
    <property type="taxonomic scope" value="Bacteria"/>
</dbReference>
<dbReference type="HOGENOM" id="CLU_029101_0_0_7"/>
<dbReference type="InParanoid" id="A0LQM1"/>
<dbReference type="OrthoDB" id="9793973at2"/>
<dbReference type="Proteomes" id="UP000001784">
    <property type="component" value="Chromosome"/>
</dbReference>
<dbReference type="GO" id="GO:0005737">
    <property type="term" value="C:cytoplasm"/>
    <property type="evidence" value="ECO:0007669"/>
    <property type="project" value="UniProtKB-SubCell"/>
</dbReference>
<dbReference type="GO" id="GO:0051539">
    <property type="term" value="F:4 iron, 4 sulfur cluster binding"/>
    <property type="evidence" value="ECO:0007669"/>
    <property type="project" value="UniProtKB-UniRule"/>
</dbReference>
<dbReference type="GO" id="GO:0046872">
    <property type="term" value="F:metal ion binding"/>
    <property type="evidence" value="ECO:0007669"/>
    <property type="project" value="UniProtKB-KW"/>
</dbReference>
<dbReference type="GO" id="GO:0070040">
    <property type="term" value="F:rRNA (adenine(2503)-C2-)-methyltransferase activity"/>
    <property type="evidence" value="ECO:0007669"/>
    <property type="project" value="UniProtKB-UniRule"/>
</dbReference>
<dbReference type="GO" id="GO:0019843">
    <property type="term" value="F:rRNA binding"/>
    <property type="evidence" value="ECO:0007669"/>
    <property type="project" value="UniProtKB-UniRule"/>
</dbReference>
<dbReference type="GO" id="GO:0002935">
    <property type="term" value="F:tRNA (adenine(37)-C2)-methyltransferase activity"/>
    <property type="evidence" value="ECO:0007669"/>
    <property type="project" value="UniProtKB-UniRule"/>
</dbReference>
<dbReference type="GO" id="GO:0000049">
    <property type="term" value="F:tRNA binding"/>
    <property type="evidence" value="ECO:0007669"/>
    <property type="project" value="UniProtKB-UniRule"/>
</dbReference>
<dbReference type="GO" id="GO:0070475">
    <property type="term" value="P:rRNA base methylation"/>
    <property type="evidence" value="ECO:0007669"/>
    <property type="project" value="UniProtKB-UniRule"/>
</dbReference>
<dbReference type="GO" id="GO:0030488">
    <property type="term" value="P:tRNA methylation"/>
    <property type="evidence" value="ECO:0007669"/>
    <property type="project" value="UniProtKB-UniRule"/>
</dbReference>
<dbReference type="CDD" id="cd01335">
    <property type="entry name" value="Radical_SAM"/>
    <property type="match status" value="1"/>
</dbReference>
<dbReference type="FunFam" id="3.20.20.70:FF:000014">
    <property type="entry name" value="Probable dual-specificity RNA methyltransferase RlmN"/>
    <property type="match status" value="1"/>
</dbReference>
<dbReference type="Gene3D" id="1.10.150.530">
    <property type="match status" value="1"/>
</dbReference>
<dbReference type="Gene3D" id="3.20.20.70">
    <property type="entry name" value="Aldolase class I"/>
    <property type="match status" value="1"/>
</dbReference>
<dbReference type="HAMAP" id="MF_01849">
    <property type="entry name" value="RNA_methyltr_RlmN"/>
    <property type="match status" value="1"/>
</dbReference>
<dbReference type="InterPro" id="IPR013785">
    <property type="entry name" value="Aldolase_TIM"/>
</dbReference>
<dbReference type="InterPro" id="IPR006638">
    <property type="entry name" value="Elp3/MiaA/NifB-like_rSAM"/>
</dbReference>
<dbReference type="InterPro" id="IPR040072">
    <property type="entry name" value="Methyltransferase_A"/>
</dbReference>
<dbReference type="InterPro" id="IPR048641">
    <property type="entry name" value="RlmN_N"/>
</dbReference>
<dbReference type="InterPro" id="IPR027492">
    <property type="entry name" value="RNA_MTrfase_RlmN"/>
</dbReference>
<dbReference type="InterPro" id="IPR004383">
    <property type="entry name" value="rRNA_lsu_MTrfase_RlmN/Cfr"/>
</dbReference>
<dbReference type="InterPro" id="IPR007197">
    <property type="entry name" value="rSAM"/>
</dbReference>
<dbReference type="NCBIfam" id="TIGR00048">
    <property type="entry name" value="rRNA_mod_RlmN"/>
    <property type="match status" value="1"/>
</dbReference>
<dbReference type="PANTHER" id="PTHR30544">
    <property type="entry name" value="23S RRNA METHYLTRANSFERASE"/>
    <property type="match status" value="1"/>
</dbReference>
<dbReference type="PANTHER" id="PTHR30544:SF5">
    <property type="entry name" value="RADICAL SAM CORE DOMAIN-CONTAINING PROTEIN"/>
    <property type="match status" value="1"/>
</dbReference>
<dbReference type="Pfam" id="PF04055">
    <property type="entry name" value="Radical_SAM"/>
    <property type="match status" value="1"/>
</dbReference>
<dbReference type="Pfam" id="PF21016">
    <property type="entry name" value="RlmN_N"/>
    <property type="match status" value="1"/>
</dbReference>
<dbReference type="PIRSF" id="PIRSF006004">
    <property type="entry name" value="CHP00048"/>
    <property type="match status" value="1"/>
</dbReference>
<dbReference type="SFLD" id="SFLDF00275">
    <property type="entry name" value="adenosine_C2_methyltransferase"/>
    <property type="match status" value="1"/>
</dbReference>
<dbReference type="SFLD" id="SFLDS00029">
    <property type="entry name" value="Radical_SAM"/>
    <property type="match status" value="1"/>
</dbReference>
<dbReference type="SMART" id="SM00729">
    <property type="entry name" value="Elp3"/>
    <property type="match status" value="1"/>
</dbReference>
<dbReference type="SUPFAM" id="SSF102114">
    <property type="entry name" value="Radical SAM enzymes"/>
    <property type="match status" value="1"/>
</dbReference>
<dbReference type="PROSITE" id="PS51918">
    <property type="entry name" value="RADICAL_SAM"/>
    <property type="match status" value="1"/>
</dbReference>
<reference key="1">
    <citation type="submission" date="2006-10" db="EMBL/GenBank/DDBJ databases">
        <title>Complete sequence of Syntrophobacter fumaroxidans MPOB.</title>
        <authorList>
            <consortium name="US DOE Joint Genome Institute"/>
            <person name="Copeland A."/>
            <person name="Lucas S."/>
            <person name="Lapidus A."/>
            <person name="Barry K."/>
            <person name="Detter J.C."/>
            <person name="Glavina del Rio T."/>
            <person name="Hammon N."/>
            <person name="Israni S."/>
            <person name="Pitluck S."/>
            <person name="Goltsman E.G."/>
            <person name="Martinez M."/>
            <person name="Schmutz J."/>
            <person name="Larimer F."/>
            <person name="Land M."/>
            <person name="Hauser L."/>
            <person name="Kyrpides N."/>
            <person name="Kim E."/>
            <person name="Boone D.R."/>
            <person name="Brockman F."/>
            <person name="Culley D."/>
            <person name="Ferry J."/>
            <person name="Gunsalus R."/>
            <person name="McInerney M.J."/>
            <person name="Morrison M."/>
            <person name="Plugge C."/>
            <person name="Rohlin L."/>
            <person name="Scholten J."/>
            <person name="Sieber J."/>
            <person name="Stams A.J.M."/>
            <person name="Worm P."/>
            <person name="Henstra A.M."/>
            <person name="Richardson P."/>
        </authorList>
    </citation>
    <scope>NUCLEOTIDE SEQUENCE [LARGE SCALE GENOMIC DNA]</scope>
    <source>
        <strain>DSM 10017 / MPOB</strain>
    </source>
</reference>
<proteinExistence type="inferred from homology"/>
<sequence length="342" mass="38129">MEPVCVKDFTLPELEEWVQGIGERSFRARQLFRHVYGRGVRSWSECSDLSRMFRVQLEHGVELDALSVLKKEQADDGTSKYLFGLRDGHSIEAVLIPDLPRSTLCVSSQVGCALGCKFCLTGSLGFKRNLSAAEIVDQVCQVQRDLGSRSRITNIVFMGMGEPLANLDSVLRAIRVIAEPNGMAFSHRRITLSTAGLVPQLRRLGRESPVNLAVSLHAAENELRAELMPVNRTYPLEVLMAACREYPLPPRKRITFEYILLDGINDDPKQAKQLVKLLHGIRAKVNLMPFNPHPGSVFRKPSEQRVLAFQEALQNARITTHVRRSRGGEIGAACGQLVAEYG</sequence>
<protein>
    <recommendedName>
        <fullName evidence="1">Dual-specificity RNA methyltransferase RlmN</fullName>
        <ecNumber evidence="1">2.1.1.192</ecNumber>
    </recommendedName>
    <alternativeName>
        <fullName evidence="1">23S rRNA (adenine(2503)-C(2))-methyltransferase</fullName>
    </alternativeName>
    <alternativeName>
        <fullName evidence="1">23S rRNA m2A2503 methyltransferase</fullName>
    </alternativeName>
    <alternativeName>
        <fullName evidence="1">Ribosomal RNA large subunit methyltransferase N</fullName>
    </alternativeName>
    <alternativeName>
        <fullName evidence="1">tRNA (adenine(37)-C(2))-methyltransferase</fullName>
    </alternativeName>
    <alternativeName>
        <fullName evidence="1">tRNA m2A37 methyltransferase</fullName>
    </alternativeName>
</protein>
<gene>
    <name evidence="1" type="primary">rlmN</name>
    <name type="ordered locus">Sfum_4057</name>
</gene>
<evidence type="ECO:0000255" key="1">
    <source>
        <dbReference type="HAMAP-Rule" id="MF_01849"/>
    </source>
</evidence>
<evidence type="ECO:0000255" key="2">
    <source>
        <dbReference type="PROSITE-ProRule" id="PRU01266"/>
    </source>
</evidence>
<accession>A0LQM1</accession>
<name>RLMN_SYNFM</name>
<keyword id="KW-0004">4Fe-4S</keyword>
<keyword id="KW-0963">Cytoplasm</keyword>
<keyword id="KW-1015">Disulfide bond</keyword>
<keyword id="KW-0408">Iron</keyword>
<keyword id="KW-0411">Iron-sulfur</keyword>
<keyword id="KW-0479">Metal-binding</keyword>
<keyword id="KW-0489">Methyltransferase</keyword>
<keyword id="KW-1185">Reference proteome</keyword>
<keyword id="KW-0698">rRNA processing</keyword>
<keyword id="KW-0949">S-adenosyl-L-methionine</keyword>
<keyword id="KW-0808">Transferase</keyword>
<keyword id="KW-0819">tRNA processing</keyword>
<feature type="chain" id="PRO_0000350491" description="Dual-specificity RNA methyltransferase RlmN">
    <location>
        <begin position="1"/>
        <end position="342"/>
    </location>
</feature>
<feature type="domain" description="Radical SAM core" evidence="2">
    <location>
        <begin position="98"/>
        <end position="329"/>
    </location>
</feature>
<feature type="active site" description="Proton acceptor" evidence="1">
    <location>
        <position position="92"/>
    </location>
</feature>
<feature type="active site" description="S-methylcysteine intermediate" evidence="1">
    <location>
        <position position="334"/>
    </location>
</feature>
<feature type="binding site" evidence="1">
    <location>
        <position position="112"/>
    </location>
    <ligand>
        <name>[4Fe-4S] cluster</name>
        <dbReference type="ChEBI" id="CHEBI:49883"/>
        <note>4Fe-4S-S-AdoMet</note>
    </ligand>
</feature>
<feature type="binding site" evidence="1">
    <location>
        <position position="116"/>
    </location>
    <ligand>
        <name>[4Fe-4S] cluster</name>
        <dbReference type="ChEBI" id="CHEBI:49883"/>
        <note>4Fe-4S-S-AdoMet</note>
    </ligand>
</feature>
<feature type="binding site" evidence="1">
    <location>
        <position position="119"/>
    </location>
    <ligand>
        <name>[4Fe-4S] cluster</name>
        <dbReference type="ChEBI" id="CHEBI:49883"/>
        <note>4Fe-4S-S-AdoMet</note>
    </ligand>
</feature>
<feature type="binding site" evidence="1">
    <location>
        <begin position="161"/>
        <end position="162"/>
    </location>
    <ligand>
        <name>S-adenosyl-L-methionine</name>
        <dbReference type="ChEBI" id="CHEBI:59789"/>
    </ligand>
</feature>
<feature type="binding site" evidence="1">
    <location>
        <position position="193"/>
    </location>
    <ligand>
        <name>S-adenosyl-L-methionine</name>
        <dbReference type="ChEBI" id="CHEBI:59789"/>
    </ligand>
</feature>
<feature type="binding site" evidence="1">
    <location>
        <begin position="215"/>
        <end position="217"/>
    </location>
    <ligand>
        <name>S-adenosyl-L-methionine</name>
        <dbReference type="ChEBI" id="CHEBI:59789"/>
    </ligand>
</feature>
<feature type="binding site" evidence="1">
    <location>
        <position position="291"/>
    </location>
    <ligand>
        <name>S-adenosyl-L-methionine</name>
        <dbReference type="ChEBI" id="CHEBI:59789"/>
    </ligand>
</feature>
<feature type="disulfide bond" description="(transient)" evidence="1">
    <location>
        <begin position="105"/>
        <end position="334"/>
    </location>
</feature>
<comment type="function">
    <text evidence="1">Specifically methylates position 2 of adenine 2503 in 23S rRNA and position 2 of adenine 37 in tRNAs. m2A2503 modification seems to play a crucial role in the proofreading step occurring at the peptidyl transferase center and thus would serve to optimize ribosomal fidelity.</text>
</comment>
<comment type="catalytic activity">
    <reaction evidence="1">
        <text>adenosine(2503) in 23S rRNA + 2 reduced [2Fe-2S]-[ferredoxin] + 2 S-adenosyl-L-methionine = 2-methyladenosine(2503) in 23S rRNA + 5'-deoxyadenosine + L-methionine + 2 oxidized [2Fe-2S]-[ferredoxin] + S-adenosyl-L-homocysteine</text>
        <dbReference type="Rhea" id="RHEA:42916"/>
        <dbReference type="Rhea" id="RHEA-COMP:10000"/>
        <dbReference type="Rhea" id="RHEA-COMP:10001"/>
        <dbReference type="Rhea" id="RHEA-COMP:10152"/>
        <dbReference type="Rhea" id="RHEA-COMP:10282"/>
        <dbReference type="ChEBI" id="CHEBI:17319"/>
        <dbReference type="ChEBI" id="CHEBI:33737"/>
        <dbReference type="ChEBI" id="CHEBI:33738"/>
        <dbReference type="ChEBI" id="CHEBI:57844"/>
        <dbReference type="ChEBI" id="CHEBI:57856"/>
        <dbReference type="ChEBI" id="CHEBI:59789"/>
        <dbReference type="ChEBI" id="CHEBI:74411"/>
        <dbReference type="ChEBI" id="CHEBI:74497"/>
        <dbReference type="EC" id="2.1.1.192"/>
    </reaction>
</comment>
<comment type="catalytic activity">
    <reaction evidence="1">
        <text>adenosine(37) in tRNA + 2 reduced [2Fe-2S]-[ferredoxin] + 2 S-adenosyl-L-methionine = 2-methyladenosine(37) in tRNA + 5'-deoxyadenosine + L-methionine + 2 oxidized [2Fe-2S]-[ferredoxin] + S-adenosyl-L-homocysteine</text>
        <dbReference type="Rhea" id="RHEA:43332"/>
        <dbReference type="Rhea" id="RHEA-COMP:10000"/>
        <dbReference type="Rhea" id="RHEA-COMP:10001"/>
        <dbReference type="Rhea" id="RHEA-COMP:10162"/>
        <dbReference type="Rhea" id="RHEA-COMP:10485"/>
        <dbReference type="ChEBI" id="CHEBI:17319"/>
        <dbReference type="ChEBI" id="CHEBI:33737"/>
        <dbReference type="ChEBI" id="CHEBI:33738"/>
        <dbReference type="ChEBI" id="CHEBI:57844"/>
        <dbReference type="ChEBI" id="CHEBI:57856"/>
        <dbReference type="ChEBI" id="CHEBI:59789"/>
        <dbReference type="ChEBI" id="CHEBI:74411"/>
        <dbReference type="ChEBI" id="CHEBI:74497"/>
        <dbReference type="EC" id="2.1.1.192"/>
    </reaction>
</comment>
<comment type="cofactor">
    <cofactor evidence="1">
        <name>[4Fe-4S] cluster</name>
        <dbReference type="ChEBI" id="CHEBI:49883"/>
    </cofactor>
    <text evidence="1">Binds 1 [4Fe-4S] cluster. The cluster is coordinated with 3 cysteines and an exchangeable S-adenosyl-L-methionine.</text>
</comment>
<comment type="subcellular location">
    <subcellularLocation>
        <location evidence="1">Cytoplasm</location>
    </subcellularLocation>
</comment>
<comment type="miscellaneous">
    <text evidence="1">Reaction proceeds by a ping-pong mechanism involving intermediate methylation of a conserved cysteine residue.</text>
</comment>
<comment type="similarity">
    <text evidence="1">Belongs to the radical SAM superfamily. RlmN family.</text>
</comment>
<organism>
    <name type="scientific">Syntrophobacter fumaroxidans (strain DSM 10017 / MPOB)</name>
    <dbReference type="NCBI Taxonomy" id="335543"/>
    <lineage>
        <taxon>Bacteria</taxon>
        <taxon>Pseudomonadati</taxon>
        <taxon>Thermodesulfobacteriota</taxon>
        <taxon>Syntrophobacteria</taxon>
        <taxon>Syntrophobacterales</taxon>
        <taxon>Syntrophobacteraceae</taxon>
        <taxon>Syntrophobacter</taxon>
    </lineage>
</organism>